<name>CFA77_DANRE</name>
<organism>
    <name type="scientific">Danio rerio</name>
    <name type="common">Zebrafish</name>
    <name type="synonym">Brachydanio rerio</name>
    <dbReference type="NCBI Taxonomy" id="7955"/>
    <lineage>
        <taxon>Eukaryota</taxon>
        <taxon>Metazoa</taxon>
        <taxon>Chordata</taxon>
        <taxon>Craniata</taxon>
        <taxon>Vertebrata</taxon>
        <taxon>Euteleostomi</taxon>
        <taxon>Actinopterygii</taxon>
        <taxon>Neopterygii</taxon>
        <taxon>Teleostei</taxon>
        <taxon>Ostariophysi</taxon>
        <taxon>Cypriniformes</taxon>
        <taxon>Danionidae</taxon>
        <taxon>Danioninae</taxon>
        <taxon>Danio</taxon>
    </lineage>
</organism>
<protein>
    <recommendedName>
        <fullName evidence="3">Cilia- and flagella-associated protein 77</fullName>
    </recommendedName>
</protein>
<gene>
    <name evidence="2" type="primary">cfap77</name>
    <name evidence="4" type="ORF">si:ch211-215c18.4</name>
</gene>
<sequence length="240" mass="27247">MESPRIGVVRDSMLHRPLLIKPTLGKSKSRGLSYPGPEFVFGTATTVQDGGVQEAISNWHTHTMSTTHRAAERDFIALNREGVKSGLVTAKELHQYRATHDIRRKPLTREGFRRSAPPRLSPDDSFFVSNRPSTPISELIEYKYAQRWLEEQQVRDRVLQAHQHKKAQLGRIQDTRTTLLRKSQPLPEAPSTWKLPRFQKVGAALDTFRDPEARKKAMNAHCSESVSRRGILGQGTYTVD</sequence>
<reference key="1">
    <citation type="journal article" date="2013" name="Nature">
        <title>The zebrafish reference genome sequence and its relationship to the human genome.</title>
        <authorList>
            <person name="Howe K."/>
            <person name="Clark M.D."/>
            <person name="Torroja C.F."/>
            <person name="Torrance J."/>
            <person name="Berthelot C."/>
            <person name="Muffato M."/>
            <person name="Collins J.E."/>
            <person name="Humphray S."/>
            <person name="McLaren K."/>
            <person name="Matthews L."/>
            <person name="McLaren S."/>
            <person name="Sealy I."/>
            <person name="Caccamo M."/>
            <person name="Churcher C."/>
            <person name="Scott C."/>
            <person name="Barrett J.C."/>
            <person name="Koch R."/>
            <person name="Rauch G.J."/>
            <person name="White S."/>
            <person name="Chow W."/>
            <person name="Kilian B."/>
            <person name="Quintais L.T."/>
            <person name="Guerra-Assuncao J.A."/>
            <person name="Zhou Y."/>
            <person name="Gu Y."/>
            <person name="Yen J."/>
            <person name="Vogel J.H."/>
            <person name="Eyre T."/>
            <person name="Redmond S."/>
            <person name="Banerjee R."/>
            <person name="Chi J."/>
            <person name="Fu B."/>
            <person name="Langley E."/>
            <person name="Maguire S.F."/>
            <person name="Laird G.K."/>
            <person name="Lloyd D."/>
            <person name="Kenyon E."/>
            <person name="Donaldson S."/>
            <person name="Sehra H."/>
            <person name="Almeida-King J."/>
            <person name="Loveland J."/>
            <person name="Trevanion S."/>
            <person name="Jones M."/>
            <person name="Quail M."/>
            <person name="Willey D."/>
            <person name="Hunt A."/>
            <person name="Burton J."/>
            <person name="Sims S."/>
            <person name="McLay K."/>
            <person name="Plumb B."/>
            <person name="Davis J."/>
            <person name="Clee C."/>
            <person name="Oliver K."/>
            <person name="Clark R."/>
            <person name="Riddle C."/>
            <person name="Elliot D."/>
            <person name="Threadgold G."/>
            <person name="Harden G."/>
            <person name="Ware D."/>
            <person name="Begum S."/>
            <person name="Mortimore B."/>
            <person name="Kerry G."/>
            <person name="Heath P."/>
            <person name="Phillimore B."/>
            <person name="Tracey A."/>
            <person name="Corby N."/>
            <person name="Dunn M."/>
            <person name="Johnson C."/>
            <person name="Wood J."/>
            <person name="Clark S."/>
            <person name="Pelan S."/>
            <person name="Griffiths G."/>
            <person name="Smith M."/>
            <person name="Glithero R."/>
            <person name="Howden P."/>
            <person name="Barker N."/>
            <person name="Lloyd C."/>
            <person name="Stevens C."/>
            <person name="Harley J."/>
            <person name="Holt K."/>
            <person name="Panagiotidis G."/>
            <person name="Lovell J."/>
            <person name="Beasley H."/>
            <person name="Henderson C."/>
            <person name="Gordon D."/>
            <person name="Auger K."/>
            <person name="Wright D."/>
            <person name="Collins J."/>
            <person name="Raisen C."/>
            <person name="Dyer L."/>
            <person name="Leung K."/>
            <person name="Robertson L."/>
            <person name="Ambridge K."/>
            <person name="Leongamornlert D."/>
            <person name="McGuire S."/>
            <person name="Gilderthorp R."/>
            <person name="Griffiths C."/>
            <person name="Manthravadi D."/>
            <person name="Nichol S."/>
            <person name="Barker G."/>
            <person name="Whitehead S."/>
            <person name="Kay M."/>
            <person name="Brown J."/>
            <person name="Murnane C."/>
            <person name="Gray E."/>
            <person name="Humphries M."/>
            <person name="Sycamore N."/>
            <person name="Barker D."/>
            <person name="Saunders D."/>
            <person name="Wallis J."/>
            <person name="Babbage A."/>
            <person name="Hammond S."/>
            <person name="Mashreghi-Mohammadi M."/>
            <person name="Barr L."/>
            <person name="Martin S."/>
            <person name="Wray P."/>
            <person name="Ellington A."/>
            <person name="Matthews N."/>
            <person name="Ellwood M."/>
            <person name="Woodmansey R."/>
            <person name="Clark G."/>
            <person name="Cooper J."/>
            <person name="Tromans A."/>
            <person name="Grafham D."/>
            <person name="Skuce C."/>
            <person name="Pandian R."/>
            <person name="Andrews R."/>
            <person name="Harrison E."/>
            <person name="Kimberley A."/>
            <person name="Garnett J."/>
            <person name="Fosker N."/>
            <person name="Hall R."/>
            <person name="Garner P."/>
            <person name="Kelly D."/>
            <person name="Bird C."/>
            <person name="Palmer S."/>
            <person name="Gehring I."/>
            <person name="Berger A."/>
            <person name="Dooley C.M."/>
            <person name="Ersan-Urun Z."/>
            <person name="Eser C."/>
            <person name="Geiger H."/>
            <person name="Geisler M."/>
            <person name="Karotki L."/>
            <person name="Kirn A."/>
            <person name="Konantz J."/>
            <person name="Konantz M."/>
            <person name="Oberlander M."/>
            <person name="Rudolph-Geiger S."/>
            <person name="Teucke M."/>
            <person name="Lanz C."/>
            <person name="Raddatz G."/>
            <person name="Osoegawa K."/>
            <person name="Zhu B."/>
            <person name="Rapp A."/>
            <person name="Widaa S."/>
            <person name="Langford C."/>
            <person name="Yang F."/>
            <person name="Schuster S.C."/>
            <person name="Carter N.P."/>
            <person name="Harrow J."/>
            <person name="Ning Z."/>
            <person name="Herrero J."/>
            <person name="Searle S.M."/>
            <person name="Enright A."/>
            <person name="Geisler R."/>
            <person name="Plasterk R.H."/>
            <person name="Lee C."/>
            <person name="Westerfield M."/>
            <person name="de Jong P.J."/>
            <person name="Zon L.I."/>
            <person name="Postlethwait J.H."/>
            <person name="Nusslein-Volhard C."/>
            <person name="Hubbard T.J."/>
            <person name="Roest Crollius H."/>
            <person name="Rogers J."/>
            <person name="Stemple D.L."/>
        </authorList>
    </citation>
    <scope>NUCLEOTIDE SEQUENCE [LARGE SCALE GENOMIC DNA]</scope>
    <source>
        <strain>Tuebingen</strain>
    </source>
</reference>
<evidence type="ECO:0000250" key="1">
    <source>
        <dbReference type="UniProtKB" id="A0A087WRI3"/>
    </source>
</evidence>
<evidence type="ECO:0000250" key="2">
    <source>
        <dbReference type="UniProtKB" id="Q6ZQR2"/>
    </source>
</evidence>
<evidence type="ECO:0000305" key="3"/>
<evidence type="ECO:0000312" key="4">
    <source>
        <dbReference type="EMBL" id="CAM14051.1"/>
    </source>
</evidence>
<keyword id="KW-0966">Cell projection</keyword>
<keyword id="KW-0969">Cilium</keyword>
<keyword id="KW-0963">Cytoplasm</keyword>
<keyword id="KW-0206">Cytoskeleton</keyword>
<keyword id="KW-0282">Flagellum</keyword>
<keyword id="KW-1185">Reference proteome</keyword>
<proteinExistence type="inferred from homology"/>
<accession>A2BFC9</accession>
<comment type="function">
    <text evidence="2">Microtubule inner protein (MIP) part of the dynein-decorated doublet microtubules (DMTs) in cilia axoneme, which is required for motile cilia beating.</text>
</comment>
<comment type="subcellular location">
    <subcellularLocation>
        <location evidence="2">Cytoplasm</location>
        <location evidence="2">Cytoskeleton</location>
        <location evidence="2">Cilium axoneme</location>
    </subcellularLocation>
    <subcellularLocation>
        <location evidence="1">Cytoplasm</location>
        <location evidence="1">Cytoskeleton</location>
        <location evidence="1">Flagellum axoneme</location>
    </subcellularLocation>
</comment>
<comment type="similarity">
    <text evidence="3">Belongs to the CFAP77 family.</text>
</comment>
<feature type="chain" id="PRO_0000360408" description="Cilia- and flagella-associated protein 77">
    <location>
        <begin position="1"/>
        <end position="240"/>
    </location>
</feature>
<dbReference type="EMBL" id="BX276128">
    <property type="protein sequence ID" value="CAM14051.1"/>
    <property type="molecule type" value="Genomic_DNA"/>
</dbReference>
<dbReference type="RefSeq" id="NP_001138262.1">
    <property type="nucleotide sequence ID" value="NM_001144790.1"/>
</dbReference>
<dbReference type="RefSeq" id="XP_009299788.1">
    <property type="nucleotide sequence ID" value="XM_009301513.2"/>
</dbReference>
<dbReference type="SMR" id="A2BFC9"/>
<dbReference type="FunCoup" id="A2BFC9">
    <property type="interactions" value="114"/>
</dbReference>
<dbReference type="STRING" id="7955.ENSDARP00000116312"/>
<dbReference type="PaxDb" id="7955-ENSDARP00000116312"/>
<dbReference type="PeptideAtlas" id="A2BFC9"/>
<dbReference type="Ensembl" id="ENSDART00000137400">
    <property type="protein sequence ID" value="ENSDARP00000122818"/>
    <property type="gene ID" value="ENSDARG00000068122"/>
</dbReference>
<dbReference type="Ensembl" id="ENSDART00000145021">
    <property type="protein sequence ID" value="ENSDARP00000116312"/>
    <property type="gene ID" value="ENSDARG00000068122"/>
</dbReference>
<dbReference type="GeneID" id="558957"/>
<dbReference type="KEGG" id="dre:558957"/>
<dbReference type="AGR" id="ZFIN:ZDB-GENE-060526-106"/>
<dbReference type="CTD" id="389799"/>
<dbReference type="ZFIN" id="ZDB-GENE-060526-106">
    <property type="gene designation" value="cfap77"/>
</dbReference>
<dbReference type="eggNOG" id="ENOG502S0WI">
    <property type="taxonomic scope" value="Eukaryota"/>
</dbReference>
<dbReference type="HOGENOM" id="CLU_060116_1_0_1"/>
<dbReference type="InParanoid" id="A2BFC9"/>
<dbReference type="OMA" id="QPTCPQE"/>
<dbReference type="OrthoDB" id="532484at2759"/>
<dbReference type="PhylomeDB" id="A2BFC9"/>
<dbReference type="TreeFam" id="TF329723"/>
<dbReference type="PRO" id="PR:A2BFC9"/>
<dbReference type="Proteomes" id="UP000000437">
    <property type="component" value="Alternate scaffold 5"/>
</dbReference>
<dbReference type="Proteomes" id="UP000000437">
    <property type="component" value="Chromosome 5"/>
</dbReference>
<dbReference type="Bgee" id="ENSDARG00000068122">
    <property type="expression patterns" value="Expressed in testis and 10 other cell types or tissues"/>
</dbReference>
<dbReference type="GO" id="GO:0005737">
    <property type="term" value="C:cytoplasm"/>
    <property type="evidence" value="ECO:0007669"/>
    <property type="project" value="UniProtKB-KW"/>
</dbReference>
<dbReference type="GO" id="GO:0005856">
    <property type="term" value="C:cytoskeleton"/>
    <property type="evidence" value="ECO:0007669"/>
    <property type="project" value="UniProtKB-KW"/>
</dbReference>
<dbReference type="GO" id="GO:0030425">
    <property type="term" value="C:dendrite"/>
    <property type="evidence" value="ECO:0000318"/>
    <property type="project" value="GO_Central"/>
</dbReference>
<dbReference type="GO" id="GO:0009897">
    <property type="term" value="C:external side of plasma membrane"/>
    <property type="evidence" value="ECO:0000318"/>
    <property type="project" value="GO_Central"/>
</dbReference>
<dbReference type="GO" id="GO:0045121">
    <property type="term" value="C:membrane raft"/>
    <property type="evidence" value="ECO:0000318"/>
    <property type="project" value="GO_Central"/>
</dbReference>
<dbReference type="GO" id="GO:0031514">
    <property type="term" value="C:motile cilium"/>
    <property type="evidence" value="ECO:0007669"/>
    <property type="project" value="UniProtKB-KW"/>
</dbReference>
<dbReference type="GO" id="GO:0005096">
    <property type="term" value="F:GTPase activator activity"/>
    <property type="evidence" value="ECO:0000318"/>
    <property type="project" value="GO_Central"/>
</dbReference>
<dbReference type="GO" id="GO:0007229">
    <property type="term" value="P:integrin-mediated signaling pathway"/>
    <property type="evidence" value="ECO:0000318"/>
    <property type="project" value="GO_Central"/>
</dbReference>
<dbReference type="GO" id="GO:0051894">
    <property type="term" value="P:positive regulation of focal adhesion assembly"/>
    <property type="evidence" value="ECO:0000318"/>
    <property type="project" value="GO_Central"/>
</dbReference>
<dbReference type="InterPro" id="IPR029147">
    <property type="entry name" value="CFAP77"/>
</dbReference>
<dbReference type="PANTHER" id="PTHR28617">
    <property type="entry name" value="CILIA- AND FLAGELLA-ASSOCIATED PROTEIN 77"/>
    <property type="match status" value="1"/>
</dbReference>
<dbReference type="PANTHER" id="PTHR28617:SF1">
    <property type="entry name" value="CILIA- AND FLAGELLA-ASSOCIATED PROTEIN 77"/>
    <property type="match status" value="1"/>
</dbReference>
<dbReference type="Pfam" id="PF14825">
    <property type="entry name" value="CFAP77"/>
    <property type="match status" value="1"/>
</dbReference>